<feature type="chain" id="PRO_0000060384" description="tRNA (guanine-N(1)-)-methyltransferase">
    <location>
        <begin position="1"/>
        <end position="251"/>
    </location>
</feature>
<feature type="binding site" evidence="1">
    <location>
        <position position="117"/>
    </location>
    <ligand>
        <name>S-adenosyl-L-methionine</name>
        <dbReference type="ChEBI" id="CHEBI:59789"/>
    </ligand>
</feature>
<feature type="binding site" evidence="1">
    <location>
        <begin position="137"/>
        <end position="142"/>
    </location>
    <ligand>
        <name>S-adenosyl-L-methionine</name>
        <dbReference type="ChEBI" id="CHEBI:59789"/>
    </ligand>
</feature>
<organism>
    <name type="scientific">Haemophilus ducreyi (strain 35000HP / ATCC 700724)</name>
    <dbReference type="NCBI Taxonomy" id="233412"/>
    <lineage>
        <taxon>Bacteria</taxon>
        <taxon>Pseudomonadati</taxon>
        <taxon>Pseudomonadota</taxon>
        <taxon>Gammaproteobacteria</taxon>
        <taxon>Pasteurellales</taxon>
        <taxon>Pasteurellaceae</taxon>
        <taxon>Haemophilus</taxon>
    </lineage>
</organism>
<sequence>MWIGIISLFPEMFKAITDFGVTGRAIKQNLLQIECWNPRDFTFDKHHTVDDRPYGGGPGMLMMVQPLRDAIQVAKQVARSEDGVEAKVIYLSPQGRKLDQQGVRELSANRKLILICGRYEGVDERLIQSEVDEEWSIGDYVLTGGELPAMTLIDAIARFVPGVLGKQASALEDSFAEGLLDCPHYTRPEVLDNMPVPQVLMSGNHEQIRKWRLAQSLERTWLRRPELLDSLALTDEQRVLLAKIKQQYKIS</sequence>
<comment type="function">
    <text evidence="1">Specifically methylates guanosine-37 in various tRNAs.</text>
</comment>
<comment type="catalytic activity">
    <reaction evidence="1">
        <text>guanosine(37) in tRNA + S-adenosyl-L-methionine = N(1)-methylguanosine(37) in tRNA + S-adenosyl-L-homocysteine + H(+)</text>
        <dbReference type="Rhea" id="RHEA:36899"/>
        <dbReference type="Rhea" id="RHEA-COMP:10145"/>
        <dbReference type="Rhea" id="RHEA-COMP:10147"/>
        <dbReference type="ChEBI" id="CHEBI:15378"/>
        <dbReference type="ChEBI" id="CHEBI:57856"/>
        <dbReference type="ChEBI" id="CHEBI:59789"/>
        <dbReference type="ChEBI" id="CHEBI:73542"/>
        <dbReference type="ChEBI" id="CHEBI:74269"/>
        <dbReference type="EC" id="2.1.1.228"/>
    </reaction>
</comment>
<comment type="subunit">
    <text evidence="1">Homodimer.</text>
</comment>
<comment type="subcellular location">
    <subcellularLocation>
        <location evidence="1">Cytoplasm</location>
    </subcellularLocation>
</comment>
<comment type="similarity">
    <text evidence="1">Belongs to the RNA methyltransferase TrmD family.</text>
</comment>
<reference key="1">
    <citation type="submission" date="2003-06" db="EMBL/GenBank/DDBJ databases">
        <title>The complete genome sequence of Haemophilus ducreyi.</title>
        <authorList>
            <person name="Munson R.S. Jr."/>
            <person name="Ray W.C."/>
            <person name="Mahairas G."/>
            <person name="Sabo P."/>
            <person name="Mungur R."/>
            <person name="Johnson L."/>
            <person name="Nguyen D."/>
            <person name="Wang J."/>
            <person name="Forst C."/>
            <person name="Hood L."/>
        </authorList>
    </citation>
    <scope>NUCLEOTIDE SEQUENCE [LARGE SCALE GENOMIC DNA]</scope>
    <source>
        <strain>35000HP / ATCC 700724</strain>
    </source>
</reference>
<name>TRMD_HAEDU</name>
<proteinExistence type="inferred from homology"/>
<keyword id="KW-0963">Cytoplasm</keyword>
<keyword id="KW-0489">Methyltransferase</keyword>
<keyword id="KW-1185">Reference proteome</keyword>
<keyword id="KW-0949">S-adenosyl-L-methionine</keyword>
<keyword id="KW-0808">Transferase</keyword>
<keyword id="KW-0819">tRNA processing</keyword>
<evidence type="ECO:0000255" key="1">
    <source>
        <dbReference type="HAMAP-Rule" id="MF_00605"/>
    </source>
</evidence>
<dbReference type="EC" id="2.1.1.228" evidence="1"/>
<dbReference type="EMBL" id="AE017143">
    <property type="protein sequence ID" value="AAP96667.1"/>
    <property type="molecule type" value="Genomic_DNA"/>
</dbReference>
<dbReference type="RefSeq" id="WP_010945694.1">
    <property type="nucleotide sequence ID" value="NC_002940.2"/>
</dbReference>
<dbReference type="SMR" id="Q7U331"/>
<dbReference type="STRING" id="233412.HD_1947"/>
<dbReference type="KEGG" id="hdu:HD_1947"/>
<dbReference type="eggNOG" id="COG0336">
    <property type="taxonomic scope" value="Bacteria"/>
</dbReference>
<dbReference type="HOGENOM" id="CLU_047363_0_1_6"/>
<dbReference type="OrthoDB" id="9807416at2"/>
<dbReference type="Proteomes" id="UP000001022">
    <property type="component" value="Chromosome"/>
</dbReference>
<dbReference type="GO" id="GO:0005829">
    <property type="term" value="C:cytosol"/>
    <property type="evidence" value="ECO:0007669"/>
    <property type="project" value="TreeGrafter"/>
</dbReference>
<dbReference type="GO" id="GO:0052906">
    <property type="term" value="F:tRNA (guanine(37)-N1)-methyltransferase activity"/>
    <property type="evidence" value="ECO:0007669"/>
    <property type="project" value="UniProtKB-UniRule"/>
</dbReference>
<dbReference type="GO" id="GO:0002939">
    <property type="term" value="P:tRNA N1-guanine methylation"/>
    <property type="evidence" value="ECO:0007669"/>
    <property type="project" value="TreeGrafter"/>
</dbReference>
<dbReference type="CDD" id="cd18080">
    <property type="entry name" value="TrmD-like"/>
    <property type="match status" value="1"/>
</dbReference>
<dbReference type="FunFam" id="1.10.1270.20:FF:000001">
    <property type="entry name" value="tRNA (guanine-N(1)-)-methyltransferase"/>
    <property type="match status" value="1"/>
</dbReference>
<dbReference type="FunFam" id="3.40.1280.10:FF:000001">
    <property type="entry name" value="tRNA (guanine-N(1)-)-methyltransferase"/>
    <property type="match status" value="1"/>
</dbReference>
<dbReference type="Gene3D" id="3.40.1280.10">
    <property type="match status" value="1"/>
</dbReference>
<dbReference type="Gene3D" id="1.10.1270.20">
    <property type="entry name" value="tRNA(m1g37)methyltransferase, domain 2"/>
    <property type="match status" value="1"/>
</dbReference>
<dbReference type="HAMAP" id="MF_00605">
    <property type="entry name" value="TrmD"/>
    <property type="match status" value="1"/>
</dbReference>
<dbReference type="InterPro" id="IPR029028">
    <property type="entry name" value="Alpha/beta_knot_MTases"/>
</dbReference>
<dbReference type="InterPro" id="IPR023148">
    <property type="entry name" value="tRNA_m1G_MeTrfase_C_sf"/>
</dbReference>
<dbReference type="InterPro" id="IPR002649">
    <property type="entry name" value="tRNA_m1G_MeTrfase_TrmD"/>
</dbReference>
<dbReference type="InterPro" id="IPR029026">
    <property type="entry name" value="tRNA_m1G_MTases_N"/>
</dbReference>
<dbReference type="InterPro" id="IPR016009">
    <property type="entry name" value="tRNA_MeTrfase_TRMD/TRM10"/>
</dbReference>
<dbReference type="NCBIfam" id="NF000648">
    <property type="entry name" value="PRK00026.1"/>
    <property type="match status" value="1"/>
</dbReference>
<dbReference type="NCBIfam" id="TIGR00088">
    <property type="entry name" value="trmD"/>
    <property type="match status" value="1"/>
</dbReference>
<dbReference type="PANTHER" id="PTHR46417">
    <property type="entry name" value="TRNA (GUANINE-N(1)-)-METHYLTRANSFERASE"/>
    <property type="match status" value="1"/>
</dbReference>
<dbReference type="PANTHER" id="PTHR46417:SF1">
    <property type="entry name" value="TRNA (GUANINE-N(1)-)-METHYLTRANSFERASE"/>
    <property type="match status" value="1"/>
</dbReference>
<dbReference type="Pfam" id="PF01746">
    <property type="entry name" value="tRNA_m1G_MT"/>
    <property type="match status" value="1"/>
</dbReference>
<dbReference type="PIRSF" id="PIRSF000386">
    <property type="entry name" value="tRNA_mtase"/>
    <property type="match status" value="1"/>
</dbReference>
<dbReference type="SUPFAM" id="SSF75217">
    <property type="entry name" value="alpha/beta knot"/>
    <property type="match status" value="1"/>
</dbReference>
<protein>
    <recommendedName>
        <fullName evidence="1">tRNA (guanine-N(1)-)-methyltransferase</fullName>
        <ecNumber evidence="1">2.1.1.228</ecNumber>
    </recommendedName>
    <alternativeName>
        <fullName evidence="1">M1G-methyltransferase</fullName>
    </alternativeName>
    <alternativeName>
        <fullName evidence="1">tRNA [GM37] methyltransferase</fullName>
    </alternativeName>
</protein>
<gene>
    <name evidence="1" type="primary">trmD</name>
    <name type="ordered locus">HD_1947</name>
</gene>
<accession>Q7U331</accession>